<accession>Q5FH83</accession>
<proteinExistence type="inferred from homology"/>
<keyword id="KW-0028">Amino-acid biosynthesis</keyword>
<keyword id="KW-0055">Arginine biosynthesis</keyword>
<keyword id="KW-0963">Cytoplasm</keyword>
<keyword id="KW-0456">Lyase</keyword>
<gene>
    <name evidence="1" type="primary">argH</name>
    <name type="ordered locus">ERGA_CDS_01770</name>
</gene>
<comment type="catalytic activity">
    <reaction evidence="1">
        <text>2-(N(omega)-L-arginino)succinate = fumarate + L-arginine</text>
        <dbReference type="Rhea" id="RHEA:24020"/>
        <dbReference type="ChEBI" id="CHEBI:29806"/>
        <dbReference type="ChEBI" id="CHEBI:32682"/>
        <dbReference type="ChEBI" id="CHEBI:57472"/>
        <dbReference type="EC" id="4.3.2.1"/>
    </reaction>
</comment>
<comment type="pathway">
    <text evidence="1">Amino-acid biosynthesis; L-arginine biosynthesis; L-arginine from L-ornithine and carbamoyl phosphate: step 3/3.</text>
</comment>
<comment type="subcellular location">
    <subcellularLocation>
        <location evidence="1">Cytoplasm</location>
    </subcellularLocation>
</comment>
<comment type="similarity">
    <text evidence="1">Belongs to the lyase 1 family. Argininosuccinate lyase subfamily.</text>
</comment>
<protein>
    <recommendedName>
        <fullName evidence="1">Argininosuccinate lyase</fullName>
        <shortName evidence="1">ASAL</shortName>
        <ecNumber evidence="1">4.3.2.1</ecNumber>
    </recommendedName>
    <alternativeName>
        <fullName evidence="1">Arginosuccinase</fullName>
    </alternativeName>
</protein>
<organism>
    <name type="scientific">Ehrlichia ruminantium (strain Gardel)</name>
    <dbReference type="NCBI Taxonomy" id="302409"/>
    <lineage>
        <taxon>Bacteria</taxon>
        <taxon>Pseudomonadati</taxon>
        <taxon>Pseudomonadota</taxon>
        <taxon>Alphaproteobacteria</taxon>
        <taxon>Rickettsiales</taxon>
        <taxon>Anaplasmataceae</taxon>
        <taxon>Ehrlichia</taxon>
    </lineage>
</organism>
<sequence length="466" mass="52892">MTNPLWGGRFTTSSNDIMKKINESISFDQALYEEDILTSIAHCKMLVNQKIISKYEGQLIIHGLEVIQKQIESGNFEFSTDLEDIHMNIEYSLKKMIGNIAGKLHTARSRNDQIATDLKLWIRKSIKKLEQQLHKLQSTLLNIAENHYDTIMPGFTHLQIAQPVTLGHHLMAYFEMLKRDRSRWQDLYKRMNQCPAGSAALAGTSFPIDRHFIAQELGFDSPTENSIDAVSDRDYIIEFLSNASICIMHLSRLAEEIILWCSYNFKFITLSDNITTGSSIMPQKKNPDAAELIRGKTGRIFSSLNHILIVMKGLPLAYSKDMQEDKEPLFDAERNLILCIEAMNSMLNNITINSENMLKAAEHDYSTATDLADWLVKHINLSFRESHEITGQIVKLAEHNKCKIHELTLIQLQKIIPSITEDVFSVLSAKNSVTSRTSYGGTAPINVLQAIKNGRIYLENTDSLTQ</sequence>
<evidence type="ECO:0000255" key="1">
    <source>
        <dbReference type="HAMAP-Rule" id="MF_00006"/>
    </source>
</evidence>
<name>ARLY_EHRRG</name>
<feature type="chain" id="PRO_0000240729" description="Argininosuccinate lyase">
    <location>
        <begin position="1"/>
        <end position="466"/>
    </location>
</feature>
<reference key="1">
    <citation type="journal article" date="2006" name="J. Bacteriol.">
        <title>Comparative genomic analysis of three strains of Ehrlichia ruminantium reveals an active process of genome size plasticity.</title>
        <authorList>
            <person name="Frutos R."/>
            <person name="Viari A."/>
            <person name="Ferraz C."/>
            <person name="Morgat A."/>
            <person name="Eychenie S."/>
            <person name="Kandassamy Y."/>
            <person name="Chantal I."/>
            <person name="Bensaid A."/>
            <person name="Coissac E."/>
            <person name="Vachiery N."/>
            <person name="Demaille J."/>
            <person name="Martinez D."/>
        </authorList>
    </citation>
    <scope>NUCLEOTIDE SEQUENCE [LARGE SCALE GENOMIC DNA]</scope>
    <source>
        <strain>Gardel</strain>
    </source>
</reference>
<dbReference type="EC" id="4.3.2.1" evidence="1"/>
<dbReference type="EMBL" id="CR925677">
    <property type="protein sequence ID" value="CAI27629.1"/>
    <property type="molecule type" value="Genomic_DNA"/>
</dbReference>
<dbReference type="RefSeq" id="WP_011255353.1">
    <property type="nucleotide sequence ID" value="NC_006831.1"/>
</dbReference>
<dbReference type="SMR" id="Q5FH83"/>
<dbReference type="KEGG" id="erg:ERGA_CDS_01770"/>
<dbReference type="HOGENOM" id="CLU_027272_2_3_5"/>
<dbReference type="OrthoDB" id="9769623at2"/>
<dbReference type="UniPathway" id="UPA00068">
    <property type="reaction ID" value="UER00114"/>
</dbReference>
<dbReference type="Proteomes" id="UP000000533">
    <property type="component" value="Chromosome"/>
</dbReference>
<dbReference type="GO" id="GO:0005829">
    <property type="term" value="C:cytosol"/>
    <property type="evidence" value="ECO:0007669"/>
    <property type="project" value="TreeGrafter"/>
</dbReference>
<dbReference type="GO" id="GO:0004056">
    <property type="term" value="F:argininosuccinate lyase activity"/>
    <property type="evidence" value="ECO:0007669"/>
    <property type="project" value="UniProtKB-UniRule"/>
</dbReference>
<dbReference type="GO" id="GO:0042450">
    <property type="term" value="P:arginine biosynthetic process via ornithine"/>
    <property type="evidence" value="ECO:0007669"/>
    <property type="project" value="InterPro"/>
</dbReference>
<dbReference type="GO" id="GO:0006526">
    <property type="term" value="P:L-arginine biosynthetic process"/>
    <property type="evidence" value="ECO:0007669"/>
    <property type="project" value="UniProtKB-UniRule"/>
</dbReference>
<dbReference type="CDD" id="cd01359">
    <property type="entry name" value="Argininosuccinate_lyase"/>
    <property type="match status" value="1"/>
</dbReference>
<dbReference type="FunFam" id="1.10.275.10:FF:000002">
    <property type="entry name" value="Argininosuccinate lyase"/>
    <property type="match status" value="1"/>
</dbReference>
<dbReference type="FunFam" id="1.10.40.30:FF:000001">
    <property type="entry name" value="Argininosuccinate lyase"/>
    <property type="match status" value="1"/>
</dbReference>
<dbReference type="FunFam" id="1.20.200.10:FF:000006">
    <property type="entry name" value="Argininosuccinate lyase"/>
    <property type="match status" value="1"/>
</dbReference>
<dbReference type="Gene3D" id="1.10.40.30">
    <property type="entry name" value="Fumarase/aspartase (C-terminal domain)"/>
    <property type="match status" value="1"/>
</dbReference>
<dbReference type="Gene3D" id="1.20.200.10">
    <property type="entry name" value="Fumarase/aspartase (Central domain)"/>
    <property type="match status" value="1"/>
</dbReference>
<dbReference type="Gene3D" id="1.10.275.10">
    <property type="entry name" value="Fumarase/aspartase (N-terminal domain)"/>
    <property type="match status" value="1"/>
</dbReference>
<dbReference type="HAMAP" id="MF_00006">
    <property type="entry name" value="Arg_succ_lyase"/>
    <property type="match status" value="1"/>
</dbReference>
<dbReference type="InterPro" id="IPR029419">
    <property type="entry name" value="Arg_succ_lyase_C"/>
</dbReference>
<dbReference type="InterPro" id="IPR009049">
    <property type="entry name" value="Argininosuccinate_lyase"/>
</dbReference>
<dbReference type="InterPro" id="IPR024083">
    <property type="entry name" value="Fumarase/histidase_N"/>
</dbReference>
<dbReference type="InterPro" id="IPR020557">
    <property type="entry name" value="Fumarate_lyase_CS"/>
</dbReference>
<dbReference type="InterPro" id="IPR000362">
    <property type="entry name" value="Fumarate_lyase_fam"/>
</dbReference>
<dbReference type="InterPro" id="IPR022761">
    <property type="entry name" value="Fumarate_lyase_N"/>
</dbReference>
<dbReference type="InterPro" id="IPR008948">
    <property type="entry name" value="L-Aspartase-like"/>
</dbReference>
<dbReference type="NCBIfam" id="TIGR00838">
    <property type="entry name" value="argH"/>
    <property type="match status" value="1"/>
</dbReference>
<dbReference type="PANTHER" id="PTHR43814">
    <property type="entry name" value="ARGININOSUCCINATE LYASE"/>
    <property type="match status" value="1"/>
</dbReference>
<dbReference type="PANTHER" id="PTHR43814:SF1">
    <property type="entry name" value="ARGININOSUCCINATE LYASE"/>
    <property type="match status" value="1"/>
</dbReference>
<dbReference type="Pfam" id="PF14698">
    <property type="entry name" value="ASL_C2"/>
    <property type="match status" value="1"/>
</dbReference>
<dbReference type="Pfam" id="PF00206">
    <property type="entry name" value="Lyase_1"/>
    <property type="match status" value="1"/>
</dbReference>
<dbReference type="PRINTS" id="PR00145">
    <property type="entry name" value="ARGSUCLYASE"/>
</dbReference>
<dbReference type="PRINTS" id="PR00149">
    <property type="entry name" value="FUMRATELYASE"/>
</dbReference>
<dbReference type="SUPFAM" id="SSF48557">
    <property type="entry name" value="L-aspartase-like"/>
    <property type="match status" value="1"/>
</dbReference>
<dbReference type="PROSITE" id="PS00163">
    <property type="entry name" value="FUMARATE_LYASES"/>
    <property type="match status" value="1"/>
</dbReference>